<reference key="1">
    <citation type="journal article" date="2008" name="Genome Biol.">
        <title>The complete genome, comparative and functional analysis of Stenotrophomonas maltophilia reveals an organism heavily shielded by drug resistance determinants.</title>
        <authorList>
            <person name="Crossman L.C."/>
            <person name="Gould V.C."/>
            <person name="Dow J.M."/>
            <person name="Vernikos G.S."/>
            <person name="Okazaki A."/>
            <person name="Sebaihia M."/>
            <person name="Saunders D."/>
            <person name="Arrowsmith C."/>
            <person name="Carver T."/>
            <person name="Peters N."/>
            <person name="Adlem E."/>
            <person name="Kerhornou A."/>
            <person name="Lord A."/>
            <person name="Murphy L."/>
            <person name="Seeger K."/>
            <person name="Squares R."/>
            <person name="Rutter S."/>
            <person name="Quail M.A."/>
            <person name="Rajandream M.A."/>
            <person name="Harris D."/>
            <person name="Churcher C."/>
            <person name="Bentley S.D."/>
            <person name="Parkhill J."/>
            <person name="Thomson N.R."/>
            <person name="Avison M.B."/>
        </authorList>
    </citation>
    <scope>NUCLEOTIDE SEQUENCE [LARGE SCALE GENOMIC DNA]</scope>
    <source>
        <strain>K279a</strain>
    </source>
</reference>
<proteinExistence type="inferred from homology"/>
<comment type="function">
    <text evidence="1">Catalyzes the reduction of the glycolytic intermediate dihydroxyacetone phosphate (DHAP) to sn-glycerol 3-phosphate (G3P), the key precursor for phospholipid synthesis.</text>
</comment>
<comment type="catalytic activity">
    <reaction evidence="1">
        <text>sn-glycerol 3-phosphate + NAD(+) = dihydroxyacetone phosphate + NADH + H(+)</text>
        <dbReference type="Rhea" id="RHEA:11092"/>
        <dbReference type="ChEBI" id="CHEBI:15378"/>
        <dbReference type="ChEBI" id="CHEBI:57540"/>
        <dbReference type="ChEBI" id="CHEBI:57597"/>
        <dbReference type="ChEBI" id="CHEBI:57642"/>
        <dbReference type="ChEBI" id="CHEBI:57945"/>
        <dbReference type="EC" id="1.1.1.94"/>
    </reaction>
    <physiologicalReaction direction="right-to-left" evidence="1">
        <dbReference type="Rhea" id="RHEA:11094"/>
    </physiologicalReaction>
</comment>
<comment type="catalytic activity">
    <reaction evidence="1">
        <text>sn-glycerol 3-phosphate + NADP(+) = dihydroxyacetone phosphate + NADPH + H(+)</text>
        <dbReference type="Rhea" id="RHEA:11096"/>
        <dbReference type="ChEBI" id="CHEBI:15378"/>
        <dbReference type="ChEBI" id="CHEBI:57597"/>
        <dbReference type="ChEBI" id="CHEBI:57642"/>
        <dbReference type="ChEBI" id="CHEBI:57783"/>
        <dbReference type="ChEBI" id="CHEBI:58349"/>
        <dbReference type="EC" id="1.1.1.94"/>
    </reaction>
    <physiologicalReaction direction="right-to-left" evidence="1">
        <dbReference type="Rhea" id="RHEA:11098"/>
    </physiologicalReaction>
</comment>
<comment type="pathway">
    <text evidence="1">Membrane lipid metabolism; glycerophospholipid metabolism.</text>
</comment>
<comment type="subcellular location">
    <subcellularLocation>
        <location evidence="1">Cytoplasm</location>
    </subcellularLocation>
</comment>
<comment type="similarity">
    <text evidence="1">Belongs to the NAD-dependent glycerol-3-phosphate dehydrogenase family.</text>
</comment>
<evidence type="ECO:0000255" key="1">
    <source>
        <dbReference type="HAMAP-Rule" id="MF_00394"/>
    </source>
</evidence>
<feature type="chain" id="PRO_1000123194" description="Glycerol-3-phosphate dehydrogenase [NAD(P)+]">
    <location>
        <begin position="1"/>
        <end position="341"/>
    </location>
</feature>
<feature type="active site" description="Proton acceptor" evidence="1">
    <location>
        <position position="194"/>
    </location>
</feature>
<feature type="binding site" evidence="1">
    <location>
        <position position="15"/>
    </location>
    <ligand>
        <name>NADPH</name>
        <dbReference type="ChEBI" id="CHEBI:57783"/>
    </ligand>
</feature>
<feature type="binding site" evidence="1">
    <location>
        <position position="16"/>
    </location>
    <ligand>
        <name>NADPH</name>
        <dbReference type="ChEBI" id="CHEBI:57783"/>
    </ligand>
</feature>
<feature type="binding site" evidence="1">
    <location>
        <position position="36"/>
    </location>
    <ligand>
        <name>NADPH</name>
        <dbReference type="ChEBI" id="CHEBI:57783"/>
    </ligand>
</feature>
<feature type="binding site" evidence="1">
    <location>
        <position position="110"/>
    </location>
    <ligand>
        <name>NADPH</name>
        <dbReference type="ChEBI" id="CHEBI:57783"/>
    </ligand>
</feature>
<feature type="binding site" evidence="1">
    <location>
        <position position="110"/>
    </location>
    <ligand>
        <name>sn-glycerol 3-phosphate</name>
        <dbReference type="ChEBI" id="CHEBI:57597"/>
    </ligand>
</feature>
<feature type="binding site" evidence="1">
    <location>
        <position position="139"/>
    </location>
    <ligand>
        <name>sn-glycerol 3-phosphate</name>
        <dbReference type="ChEBI" id="CHEBI:57597"/>
    </ligand>
</feature>
<feature type="binding site" evidence="1">
    <location>
        <position position="141"/>
    </location>
    <ligand>
        <name>sn-glycerol 3-phosphate</name>
        <dbReference type="ChEBI" id="CHEBI:57597"/>
    </ligand>
</feature>
<feature type="binding site" evidence="1">
    <location>
        <position position="143"/>
    </location>
    <ligand>
        <name>NADPH</name>
        <dbReference type="ChEBI" id="CHEBI:57783"/>
    </ligand>
</feature>
<feature type="binding site" evidence="1">
    <location>
        <position position="194"/>
    </location>
    <ligand>
        <name>sn-glycerol 3-phosphate</name>
        <dbReference type="ChEBI" id="CHEBI:57597"/>
    </ligand>
</feature>
<feature type="binding site" evidence="1">
    <location>
        <position position="247"/>
    </location>
    <ligand>
        <name>sn-glycerol 3-phosphate</name>
        <dbReference type="ChEBI" id="CHEBI:57597"/>
    </ligand>
</feature>
<feature type="binding site" evidence="1">
    <location>
        <position position="257"/>
    </location>
    <ligand>
        <name>sn-glycerol 3-phosphate</name>
        <dbReference type="ChEBI" id="CHEBI:57597"/>
    </ligand>
</feature>
<feature type="binding site" evidence="1">
    <location>
        <position position="258"/>
    </location>
    <ligand>
        <name>NADPH</name>
        <dbReference type="ChEBI" id="CHEBI:57783"/>
    </ligand>
</feature>
<feature type="binding site" evidence="1">
    <location>
        <position position="258"/>
    </location>
    <ligand>
        <name>sn-glycerol 3-phosphate</name>
        <dbReference type="ChEBI" id="CHEBI:57597"/>
    </ligand>
</feature>
<feature type="binding site" evidence="1">
    <location>
        <position position="259"/>
    </location>
    <ligand>
        <name>sn-glycerol 3-phosphate</name>
        <dbReference type="ChEBI" id="CHEBI:57597"/>
    </ligand>
</feature>
<feature type="binding site" evidence="1">
    <location>
        <position position="282"/>
    </location>
    <ligand>
        <name>NADPH</name>
        <dbReference type="ChEBI" id="CHEBI:57783"/>
    </ligand>
</feature>
<feature type="binding site" evidence="1">
    <location>
        <position position="284"/>
    </location>
    <ligand>
        <name>NADPH</name>
        <dbReference type="ChEBI" id="CHEBI:57783"/>
    </ligand>
</feature>
<name>GPDA_STRMK</name>
<organism>
    <name type="scientific">Stenotrophomonas maltophilia (strain K279a)</name>
    <dbReference type="NCBI Taxonomy" id="522373"/>
    <lineage>
        <taxon>Bacteria</taxon>
        <taxon>Pseudomonadati</taxon>
        <taxon>Pseudomonadota</taxon>
        <taxon>Gammaproteobacteria</taxon>
        <taxon>Lysobacterales</taxon>
        <taxon>Lysobacteraceae</taxon>
        <taxon>Stenotrophomonas</taxon>
        <taxon>Stenotrophomonas maltophilia group</taxon>
    </lineage>
</organism>
<protein>
    <recommendedName>
        <fullName evidence="1">Glycerol-3-phosphate dehydrogenase [NAD(P)+]</fullName>
        <ecNumber evidence="1">1.1.1.94</ecNumber>
    </recommendedName>
    <alternativeName>
        <fullName evidence="1">NAD(P)(+)-dependent glycerol-3-phosphate dehydrogenase</fullName>
    </alternativeName>
    <alternativeName>
        <fullName evidence="1">NAD(P)H-dependent dihydroxyacetone-phosphate reductase</fullName>
    </alternativeName>
</protein>
<sequence>MSTTADKIAVLGAGSWGTALASLLARHGHPTVLWGRDAAVVEAIDQRHENPRYLPGIPLPDSLRATTDLASAVEGAAWILVVTPSHAFGETVRALAPLRPAGAGVAWATKGFEPGSGRFLHEVAREVLGEDVPLAVVTGPSFAKEVTQGLPTAITVHGDVPEFAQMVAEAMHGPAFRAYTGDDMVGAELGGAMKNVLAVATGVADGMQLGLNARAGLITRGLNEMLRLAAAIGAKPETLMGLAGLGDLVLTCTGDLSRNRRLGLALGRGQTLQDAVREIGQVVESVQTADEVMRQARRHGIDLPISDRVRAVLHGEQTPEEGLRALLAREQKPEYPDTLFK</sequence>
<keyword id="KW-0963">Cytoplasm</keyword>
<keyword id="KW-0444">Lipid biosynthesis</keyword>
<keyword id="KW-0443">Lipid metabolism</keyword>
<keyword id="KW-0520">NAD</keyword>
<keyword id="KW-0521">NADP</keyword>
<keyword id="KW-0547">Nucleotide-binding</keyword>
<keyword id="KW-0560">Oxidoreductase</keyword>
<keyword id="KW-0594">Phospholipid biosynthesis</keyword>
<keyword id="KW-1208">Phospholipid metabolism</keyword>
<keyword id="KW-1185">Reference proteome</keyword>
<gene>
    <name evidence="1" type="primary">gpsA</name>
    <name type="ordered locus">Smlt0172</name>
</gene>
<accession>B2FHD8</accession>
<dbReference type="EC" id="1.1.1.94" evidence="1"/>
<dbReference type="EMBL" id="AM743169">
    <property type="protein sequence ID" value="CAQ43781.1"/>
    <property type="molecule type" value="Genomic_DNA"/>
</dbReference>
<dbReference type="RefSeq" id="WP_012478742.1">
    <property type="nucleotide sequence ID" value="NC_010943.1"/>
</dbReference>
<dbReference type="SMR" id="B2FHD8"/>
<dbReference type="EnsemblBacteria" id="CAQ43781">
    <property type="protein sequence ID" value="CAQ43781"/>
    <property type="gene ID" value="Smlt0172"/>
</dbReference>
<dbReference type="KEGG" id="sml:Smlt0172"/>
<dbReference type="eggNOG" id="COG0240">
    <property type="taxonomic scope" value="Bacteria"/>
</dbReference>
<dbReference type="HOGENOM" id="CLU_033449_0_2_6"/>
<dbReference type="UniPathway" id="UPA00940"/>
<dbReference type="Proteomes" id="UP000008840">
    <property type="component" value="Chromosome"/>
</dbReference>
<dbReference type="GO" id="GO:0005829">
    <property type="term" value="C:cytosol"/>
    <property type="evidence" value="ECO:0007669"/>
    <property type="project" value="TreeGrafter"/>
</dbReference>
<dbReference type="GO" id="GO:0047952">
    <property type="term" value="F:glycerol-3-phosphate dehydrogenase [NAD(P)+] activity"/>
    <property type="evidence" value="ECO:0007669"/>
    <property type="project" value="UniProtKB-UniRule"/>
</dbReference>
<dbReference type="GO" id="GO:0051287">
    <property type="term" value="F:NAD binding"/>
    <property type="evidence" value="ECO:0007669"/>
    <property type="project" value="InterPro"/>
</dbReference>
<dbReference type="GO" id="GO:0005975">
    <property type="term" value="P:carbohydrate metabolic process"/>
    <property type="evidence" value="ECO:0007669"/>
    <property type="project" value="InterPro"/>
</dbReference>
<dbReference type="GO" id="GO:0046167">
    <property type="term" value="P:glycerol-3-phosphate biosynthetic process"/>
    <property type="evidence" value="ECO:0007669"/>
    <property type="project" value="UniProtKB-UniRule"/>
</dbReference>
<dbReference type="GO" id="GO:0046168">
    <property type="term" value="P:glycerol-3-phosphate catabolic process"/>
    <property type="evidence" value="ECO:0007669"/>
    <property type="project" value="InterPro"/>
</dbReference>
<dbReference type="GO" id="GO:0046474">
    <property type="term" value="P:glycerophospholipid biosynthetic process"/>
    <property type="evidence" value="ECO:0007669"/>
    <property type="project" value="TreeGrafter"/>
</dbReference>
<dbReference type="FunFam" id="1.10.1040.10:FF:000001">
    <property type="entry name" value="Glycerol-3-phosphate dehydrogenase [NAD(P)+]"/>
    <property type="match status" value="1"/>
</dbReference>
<dbReference type="FunFam" id="3.40.50.720:FF:000019">
    <property type="entry name" value="Glycerol-3-phosphate dehydrogenase [NAD(P)+]"/>
    <property type="match status" value="1"/>
</dbReference>
<dbReference type="Gene3D" id="1.10.1040.10">
    <property type="entry name" value="N-(1-d-carboxylethyl)-l-norvaline Dehydrogenase, domain 2"/>
    <property type="match status" value="1"/>
</dbReference>
<dbReference type="Gene3D" id="3.40.50.720">
    <property type="entry name" value="NAD(P)-binding Rossmann-like Domain"/>
    <property type="match status" value="1"/>
</dbReference>
<dbReference type="HAMAP" id="MF_00394">
    <property type="entry name" value="NAD_Glyc3P_dehydrog"/>
    <property type="match status" value="1"/>
</dbReference>
<dbReference type="InterPro" id="IPR008927">
    <property type="entry name" value="6-PGluconate_DH-like_C_sf"/>
</dbReference>
<dbReference type="InterPro" id="IPR013328">
    <property type="entry name" value="6PGD_dom2"/>
</dbReference>
<dbReference type="InterPro" id="IPR006168">
    <property type="entry name" value="G3P_DH_NAD-dep"/>
</dbReference>
<dbReference type="InterPro" id="IPR006109">
    <property type="entry name" value="G3P_DH_NAD-dep_C"/>
</dbReference>
<dbReference type="InterPro" id="IPR011128">
    <property type="entry name" value="G3P_DH_NAD-dep_N"/>
</dbReference>
<dbReference type="InterPro" id="IPR036291">
    <property type="entry name" value="NAD(P)-bd_dom_sf"/>
</dbReference>
<dbReference type="NCBIfam" id="NF000940">
    <property type="entry name" value="PRK00094.1-2"/>
    <property type="match status" value="1"/>
</dbReference>
<dbReference type="NCBIfam" id="NF000942">
    <property type="entry name" value="PRK00094.1-4"/>
    <property type="match status" value="1"/>
</dbReference>
<dbReference type="PANTHER" id="PTHR11728">
    <property type="entry name" value="GLYCEROL-3-PHOSPHATE DEHYDROGENASE"/>
    <property type="match status" value="1"/>
</dbReference>
<dbReference type="PANTHER" id="PTHR11728:SF1">
    <property type="entry name" value="GLYCEROL-3-PHOSPHATE DEHYDROGENASE [NAD(+)] 2, CHLOROPLASTIC"/>
    <property type="match status" value="1"/>
</dbReference>
<dbReference type="Pfam" id="PF07479">
    <property type="entry name" value="NAD_Gly3P_dh_C"/>
    <property type="match status" value="1"/>
</dbReference>
<dbReference type="Pfam" id="PF01210">
    <property type="entry name" value="NAD_Gly3P_dh_N"/>
    <property type="match status" value="1"/>
</dbReference>
<dbReference type="PIRSF" id="PIRSF000114">
    <property type="entry name" value="Glycerol-3-P_dh"/>
    <property type="match status" value="1"/>
</dbReference>
<dbReference type="PRINTS" id="PR00077">
    <property type="entry name" value="GPDHDRGNASE"/>
</dbReference>
<dbReference type="SUPFAM" id="SSF48179">
    <property type="entry name" value="6-phosphogluconate dehydrogenase C-terminal domain-like"/>
    <property type="match status" value="1"/>
</dbReference>
<dbReference type="SUPFAM" id="SSF51735">
    <property type="entry name" value="NAD(P)-binding Rossmann-fold domains"/>
    <property type="match status" value="1"/>
</dbReference>
<dbReference type="PROSITE" id="PS00957">
    <property type="entry name" value="NAD_G3PDH"/>
    <property type="match status" value="1"/>
</dbReference>